<name>Y107_METJA</name>
<feature type="chain" id="PRO_0000106696" description="Uncharacterized protein MJ0107">
    <location>
        <begin position="1"/>
        <end position="525"/>
    </location>
</feature>
<feature type="transmembrane region" description="Helical" evidence="1">
    <location>
        <begin position="28"/>
        <end position="48"/>
    </location>
</feature>
<feature type="transmembrane region" description="Helical" evidence="1">
    <location>
        <begin position="353"/>
        <end position="373"/>
    </location>
</feature>
<feature type="domain" description="Pterin-binding" evidence="2">
    <location>
        <begin position="146"/>
        <end position="394"/>
    </location>
</feature>
<gene>
    <name type="ordered locus">MJ0107</name>
</gene>
<keyword id="KW-1003">Cell membrane</keyword>
<keyword id="KW-0472">Membrane</keyword>
<keyword id="KW-1185">Reference proteome</keyword>
<keyword id="KW-0812">Transmembrane</keyword>
<keyword id="KW-1133">Transmembrane helix</keyword>
<proteinExistence type="predicted"/>
<dbReference type="EMBL" id="L77117">
    <property type="protein sequence ID" value="AAB98089.1"/>
    <property type="molecule type" value="Genomic_DNA"/>
</dbReference>
<dbReference type="PIR" id="C64313">
    <property type="entry name" value="C64313"/>
</dbReference>
<dbReference type="SMR" id="Q57571"/>
<dbReference type="FunCoup" id="Q57571">
    <property type="interactions" value="1"/>
</dbReference>
<dbReference type="STRING" id="243232.MJ_0107"/>
<dbReference type="PaxDb" id="243232-MJ_0107"/>
<dbReference type="EnsemblBacteria" id="AAB98089">
    <property type="protein sequence ID" value="AAB98089"/>
    <property type="gene ID" value="MJ_0107"/>
</dbReference>
<dbReference type="KEGG" id="mja:MJ_0107"/>
<dbReference type="eggNOG" id="arCOG01978">
    <property type="taxonomic scope" value="Archaea"/>
</dbReference>
<dbReference type="HOGENOM" id="CLU_041129_0_0_2"/>
<dbReference type="InParanoid" id="Q57571"/>
<dbReference type="OrthoDB" id="70327at2157"/>
<dbReference type="PhylomeDB" id="Q57571"/>
<dbReference type="Proteomes" id="UP000000805">
    <property type="component" value="Chromosome"/>
</dbReference>
<dbReference type="GO" id="GO:0005737">
    <property type="term" value="C:cytoplasm"/>
    <property type="evidence" value="ECO:0000318"/>
    <property type="project" value="GO_Central"/>
</dbReference>
<dbReference type="GO" id="GO:0005886">
    <property type="term" value="C:plasma membrane"/>
    <property type="evidence" value="ECO:0007669"/>
    <property type="project" value="UniProtKB-SubCell"/>
</dbReference>
<dbReference type="GO" id="GO:0004150">
    <property type="term" value="F:dihydroneopterin aldolase activity"/>
    <property type="evidence" value="ECO:0000318"/>
    <property type="project" value="GO_Central"/>
</dbReference>
<dbReference type="GO" id="GO:0016740">
    <property type="term" value="F:transferase activity"/>
    <property type="evidence" value="ECO:0007669"/>
    <property type="project" value="UniProtKB-ARBA"/>
</dbReference>
<dbReference type="GO" id="GO:0009396">
    <property type="term" value="P:folic acid-containing compound biosynthetic process"/>
    <property type="evidence" value="ECO:0007669"/>
    <property type="project" value="InterPro"/>
</dbReference>
<dbReference type="CDD" id="cd00423">
    <property type="entry name" value="Pterin_binding"/>
    <property type="match status" value="1"/>
</dbReference>
<dbReference type="FunFam" id="3.20.20.20:FF:000021">
    <property type="entry name" value="Dihydropteroate synthase-related protein"/>
    <property type="match status" value="1"/>
</dbReference>
<dbReference type="Gene3D" id="3.20.20.20">
    <property type="entry name" value="Dihydropteroate synthase-like"/>
    <property type="match status" value="1"/>
</dbReference>
<dbReference type="InterPro" id="IPR045031">
    <property type="entry name" value="DHP_synth-like"/>
</dbReference>
<dbReference type="InterPro" id="IPR005236">
    <property type="entry name" value="Dihydropt_synth"/>
</dbReference>
<dbReference type="InterPro" id="IPR011005">
    <property type="entry name" value="Dihydropteroate_synth-like_sf"/>
</dbReference>
<dbReference type="InterPro" id="IPR045406">
    <property type="entry name" value="DUF6513"/>
</dbReference>
<dbReference type="InterPro" id="IPR000489">
    <property type="entry name" value="Pterin-binding_dom"/>
</dbReference>
<dbReference type="InterPro" id="IPR025595">
    <property type="entry name" value="PterinBD-DUF4346"/>
</dbReference>
<dbReference type="NCBIfam" id="TIGR00284">
    <property type="entry name" value="dihydropteroate synthase-like protein"/>
    <property type="match status" value="1"/>
</dbReference>
<dbReference type="PANTHER" id="PTHR20941">
    <property type="entry name" value="FOLATE SYNTHESIS PROTEINS"/>
    <property type="match status" value="1"/>
</dbReference>
<dbReference type="PANTHER" id="PTHR20941:SF1">
    <property type="entry name" value="FOLIC ACID SYNTHESIS PROTEIN FOL1"/>
    <property type="match status" value="1"/>
</dbReference>
<dbReference type="Pfam" id="PF20123">
    <property type="entry name" value="DUF6513"/>
    <property type="match status" value="1"/>
</dbReference>
<dbReference type="Pfam" id="PF00809">
    <property type="entry name" value="Pterin_bind"/>
    <property type="match status" value="1"/>
</dbReference>
<dbReference type="Pfam" id="PF14251">
    <property type="entry name" value="PterinBD-DUF4346"/>
    <property type="match status" value="1"/>
</dbReference>
<dbReference type="SUPFAM" id="SSF51717">
    <property type="entry name" value="Dihydropteroate synthetase-like"/>
    <property type="match status" value="1"/>
</dbReference>
<dbReference type="PROSITE" id="PS50972">
    <property type="entry name" value="PTERIN_BINDING"/>
    <property type="match status" value="1"/>
</dbReference>
<accession>Q57571</accession>
<reference key="1">
    <citation type="journal article" date="1996" name="Science">
        <title>Complete genome sequence of the methanogenic archaeon, Methanococcus jannaschii.</title>
        <authorList>
            <person name="Bult C.J."/>
            <person name="White O."/>
            <person name="Olsen G.J."/>
            <person name="Zhou L."/>
            <person name="Fleischmann R.D."/>
            <person name="Sutton G.G."/>
            <person name="Blake J.A."/>
            <person name="FitzGerald L.M."/>
            <person name="Clayton R.A."/>
            <person name="Gocayne J.D."/>
            <person name="Kerlavage A.R."/>
            <person name="Dougherty B.A."/>
            <person name="Tomb J.-F."/>
            <person name="Adams M.D."/>
            <person name="Reich C.I."/>
            <person name="Overbeek R."/>
            <person name="Kirkness E.F."/>
            <person name="Weinstock K.G."/>
            <person name="Merrick J.M."/>
            <person name="Glodek A."/>
            <person name="Scott J.L."/>
            <person name="Geoghagen N.S.M."/>
            <person name="Weidman J.F."/>
            <person name="Fuhrmann J.L."/>
            <person name="Nguyen D."/>
            <person name="Utterback T.R."/>
            <person name="Kelley J.M."/>
            <person name="Peterson J.D."/>
            <person name="Sadow P.W."/>
            <person name="Hanna M.C."/>
            <person name="Cotton M.D."/>
            <person name="Roberts K.M."/>
            <person name="Hurst M.A."/>
            <person name="Kaine B.P."/>
            <person name="Borodovsky M."/>
            <person name="Klenk H.-P."/>
            <person name="Fraser C.M."/>
            <person name="Smith H.O."/>
            <person name="Woese C.R."/>
            <person name="Venter J.C."/>
        </authorList>
    </citation>
    <scope>NUCLEOTIDE SEQUENCE [LARGE SCALE GENOMIC DNA]</scope>
    <source>
        <strain>ATCC 43067 / DSM 2661 / JAL-1 / JCM 10045 / NBRC 100440</strain>
    </source>
</reference>
<reference key="2">
    <citation type="journal article" date="1999" name="Nat. Struct. Biol.">
        <title>Identifying two ancient enzymes in Archaea using predicted secondary structure alignment.</title>
        <authorList>
            <person name="Xu H."/>
            <person name="Aurora R."/>
            <person name="Rose G.D."/>
            <person name="White R.H."/>
        </authorList>
    </citation>
    <scope>LACK OF DHPS ACTIVITY</scope>
    <source>
        <strain>ATCC 43067 / DSM 2661 / JAL-1 / JCM 10045 / NBRC 100440</strain>
    </source>
</reference>
<protein>
    <recommendedName>
        <fullName>Uncharacterized protein MJ0107</fullName>
    </recommendedName>
</protein>
<sequence length="525" mass="59645">MREIMKILIITGKLAERKVKDAVKKYDFIDVHVANISVAAFLTPNLIIKEIKKLENKLGKKLKDIYDFVLVTGLIRHDLKNVEEETGIKCFKSTREASDIPILIENLDKIKLSTKEYADLQLLEIIRKKCEEEIKKAEEQELGEGDIKIGKLKVGDKFPMRVLGEIVHAPWLKEKELEEKIIYYLESGADMIDLGMVSNENNADKIKDMLKIARDLTDNPISVDTLNTKELIEAINLGADMILSVDAGNLDELIPYLKDSETAVVVLPTNYKTNYVPETIEGKIKSLEENIKKLIDAGIEKIVADPILEPINNAGCSFIESVIACREFKKRNKLPLFFGVGNVTELFDADSNGVNALLAAIGAEIGANILFTPEASAKCKFSIKELKIASKMMFLAKKRNSLPKDIGYNLINYKDKRFEEEITFNSYNIPIIKAEEDERQILDEGSFKIEIDRKNKEIVAIYFNKRREPVLIIRGKKPKEIYETAIRLNLIKKLDHASYFGRELAKAEIALRIGKKYNQDFDLFL</sequence>
<organism>
    <name type="scientific">Methanocaldococcus jannaschii (strain ATCC 43067 / DSM 2661 / JAL-1 / JCM 10045 / NBRC 100440)</name>
    <name type="common">Methanococcus jannaschii</name>
    <dbReference type="NCBI Taxonomy" id="243232"/>
    <lineage>
        <taxon>Archaea</taxon>
        <taxon>Methanobacteriati</taxon>
        <taxon>Methanobacteriota</taxon>
        <taxon>Methanomada group</taxon>
        <taxon>Methanococci</taxon>
        <taxon>Methanococcales</taxon>
        <taxon>Methanocaldococcaceae</taxon>
        <taxon>Methanocaldococcus</taxon>
    </lineage>
</organism>
<comment type="function">
    <text>Unknown. Does not possess dihydropteroate synthase (DHPS) activity since it does not catalyze the condensation of 6-hydroxymethyl-7,8-dihydropterin pyrophosphate (DHPP) and 4-aminobenzoate to form 7,8-dihydropteroate.</text>
</comment>
<comment type="subcellular location">
    <subcellularLocation>
        <location evidence="3">Cell membrane</location>
        <topology evidence="3">Multi-pass membrane protein</topology>
    </subcellularLocation>
</comment>
<evidence type="ECO:0000255" key="1"/>
<evidence type="ECO:0000255" key="2">
    <source>
        <dbReference type="PROSITE-ProRule" id="PRU00334"/>
    </source>
</evidence>
<evidence type="ECO:0000305" key="3"/>